<organism>
    <name type="scientific">Erwinia tasmaniensis (strain DSM 17950 / CFBP 7177 / CIP 109463 / NCPPB 4357 / Et1/99)</name>
    <dbReference type="NCBI Taxonomy" id="465817"/>
    <lineage>
        <taxon>Bacteria</taxon>
        <taxon>Pseudomonadati</taxon>
        <taxon>Pseudomonadota</taxon>
        <taxon>Gammaproteobacteria</taxon>
        <taxon>Enterobacterales</taxon>
        <taxon>Erwiniaceae</taxon>
        <taxon>Erwinia</taxon>
    </lineage>
</organism>
<proteinExistence type="inferred from homology"/>
<sequence length="245" mass="27247">MSPYKAILRPNGFTFKQFFIAHDRCAMKVGTDGVLLGAWAPVTSVKRVLDIGSGSGLIALMLAQRTSEPVQIDAVELDEEAATQAQENVAASPWAHRVHVQQADVVEWAQRCEHSYSLIVSNPPYFSPGSQCASPERTTARYTTGLTHEMLLDCAEKLIDEDGFFCVILPASAGSKLLEQALQRGWHLRFRTDIADNDTRPANRVLLALSPQPGERLLDSMTIRGPDRQYSAAHCRLTRDFYLFR</sequence>
<evidence type="ECO:0000255" key="1">
    <source>
        <dbReference type="HAMAP-Rule" id="MF_01872"/>
    </source>
</evidence>
<evidence type="ECO:0000305" key="2"/>
<name>TRMN6_ERWT9</name>
<comment type="function">
    <text evidence="1">Specifically methylates the adenine in position 37 of tRNA(1)(Val) (anticodon cmo5UAC).</text>
</comment>
<comment type="catalytic activity">
    <reaction evidence="1">
        <text>adenosine(37) in tRNA1(Val) + S-adenosyl-L-methionine = N(6)-methyladenosine(37) in tRNA1(Val) + S-adenosyl-L-homocysteine + H(+)</text>
        <dbReference type="Rhea" id="RHEA:43160"/>
        <dbReference type="Rhea" id="RHEA-COMP:10369"/>
        <dbReference type="Rhea" id="RHEA-COMP:10370"/>
        <dbReference type="ChEBI" id="CHEBI:15378"/>
        <dbReference type="ChEBI" id="CHEBI:57856"/>
        <dbReference type="ChEBI" id="CHEBI:59789"/>
        <dbReference type="ChEBI" id="CHEBI:74411"/>
        <dbReference type="ChEBI" id="CHEBI:74449"/>
        <dbReference type="EC" id="2.1.1.223"/>
    </reaction>
</comment>
<comment type="subcellular location">
    <subcellularLocation>
        <location evidence="1">Cytoplasm</location>
    </subcellularLocation>
</comment>
<comment type="similarity">
    <text evidence="1">Belongs to the methyltransferase superfamily. tRNA (adenine-N(6)-)-methyltransferase family.</text>
</comment>
<comment type="sequence caution" evidence="2">
    <conflict type="erroneous initiation">
        <sequence resource="EMBL-CDS" id="CAO96028"/>
    </conflict>
</comment>
<reference key="1">
    <citation type="journal article" date="2008" name="Environ. Microbiol.">
        <title>The genome of Erwinia tasmaniensis strain Et1/99, a non-pathogenic bacterium in the genus Erwinia.</title>
        <authorList>
            <person name="Kube M."/>
            <person name="Migdoll A.M."/>
            <person name="Mueller I."/>
            <person name="Kuhl H."/>
            <person name="Beck A."/>
            <person name="Reinhardt R."/>
            <person name="Geider K."/>
        </authorList>
    </citation>
    <scope>NUCLEOTIDE SEQUENCE [LARGE SCALE GENOMIC DNA]</scope>
    <source>
        <strain>DSM 17950 / CFBP 7177 / CIP 109463 / NCPPB 4357 / Et1/99</strain>
    </source>
</reference>
<protein>
    <recommendedName>
        <fullName evidence="1">tRNA1(Val) (adenine(37)-N6)-methyltransferase</fullName>
        <ecNumber evidence="1">2.1.1.223</ecNumber>
    </recommendedName>
    <alternativeName>
        <fullName evidence="1">tRNA m6A37 methyltransferase</fullName>
    </alternativeName>
</protein>
<accession>B2VI36</accession>
<feature type="chain" id="PRO_0000387354" description="tRNA1(Val) (adenine(37)-N6)-methyltransferase">
    <location>
        <begin position="1"/>
        <end position="245"/>
    </location>
</feature>
<gene>
    <name type="ordered locus">ETA_09820</name>
</gene>
<dbReference type="EC" id="2.1.1.223" evidence="1"/>
<dbReference type="EMBL" id="CU468135">
    <property type="protein sequence ID" value="CAO96028.1"/>
    <property type="status" value="ALT_INIT"/>
    <property type="molecule type" value="Genomic_DNA"/>
</dbReference>
<dbReference type="RefSeq" id="WP_042958711.1">
    <property type="nucleotide sequence ID" value="NC_010694.1"/>
</dbReference>
<dbReference type="SMR" id="B2VI36"/>
<dbReference type="STRING" id="465817.ETA_09820"/>
<dbReference type="KEGG" id="eta:ETA_09820"/>
<dbReference type="eggNOG" id="COG4123">
    <property type="taxonomic scope" value="Bacteria"/>
</dbReference>
<dbReference type="HOGENOM" id="CLU_061983_0_0_6"/>
<dbReference type="OrthoDB" id="5383291at2"/>
<dbReference type="Proteomes" id="UP000001726">
    <property type="component" value="Chromosome"/>
</dbReference>
<dbReference type="GO" id="GO:0005737">
    <property type="term" value="C:cytoplasm"/>
    <property type="evidence" value="ECO:0007669"/>
    <property type="project" value="UniProtKB-SubCell"/>
</dbReference>
<dbReference type="GO" id="GO:0003676">
    <property type="term" value="F:nucleic acid binding"/>
    <property type="evidence" value="ECO:0007669"/>
    <property type="project" value="InterPro"/>
</dbReference>
<dbReference type="GO" id="GO:0016430">
    <property type="term" value="F:tRNA (adenine-N6)-methyltransferase activity"/>
    <property type="evidence" value="ECO:0007669"/>
    <property type="project" value="UniProtKB-UniRule"/>
</dbReference>
<dbReference type="GO" id="GO:0032259">
    <property type="term" value="P:methylation"/>
    <property type="evidence" value="ECO:0007669"/>
    <property type="project" value="UniProtKB-KW"/>
</dbReference>
<dbReference type="GO" id="GO:0008033">
    <property type="term" value="P:tRNA processing"/>
    <property type="evidence" value="ECO:0007669"/>
    <property type="project" value="UniProtKB-UniRule"/>
</dbReference>
<dbReference type="CDD" id="cd02440">
    <property type="entry name" value="AdoMet_MTases"/>
    <property type="match status" value="1"/>
</dbReference>
<dbReference type="Gene3D" id="3.40.50.150">
    <property type="entry name" value="Vaccinia Virus protein VP39"/>
    <property type="match status" value="1"/>
</dbReference>
<dbReference type="HAMAP" id="MF_01872">
    <property type="entry name" value="tRNA_methyltr_YfiC"/>
    <property type="match status" value="1"/>
</dbReference>
<dbReference type="InterPro" id="IPR002052">
    <property type="entry name" value="DNA_methylase_N6_adenine_CS"/>
</dbReference>
<dbReference type="InterPro" id="IPR029063">
    <property type="entry name" value="SAM-dependent_MTases_sf"/>
</dbReference>
<dbReference type="InterPro" id="IPR007848">
    <property type="entry name" value="Small_mtfrase_dom"/>
</dbReference>
<dbReference type="InterPro" id="IPR050210">
    <property type="entry name" value="tRNA_Adenine-N(6)_MTase"/>
</dbReference>
<dbReference type="InterPro" id="IPR022882">
    <property type="entry name" value="tRNA_adenine-N6_MeTrfase"/>
</dbReference>
<dbReference type="NCBIfam" id="NF047853">
    <property type="entry name" value="tRm6a37MtseTrmN"/>
    <property type="match status" value="1"/>
</dbReference>
<dbReference type="PANTHER" id="PTHR47739">
    <property type="entry name" value="TRNA1(VAL) (ADENINE(37)-N6)-METHYLTRANSFERASE"/>
    <property type="match status" value="1"/>
</dbReference>
<dbReference type="PANTHER" id="PTHR47739:SF1">
    <property type="entry name" value="TRNA1(VAL) (ADENINE(37)-N6)-METHYLTRANSFERASE"/>
    <property type="match status" value="1"/>
</dbReference>
<dbReference type="Pfam" id="PF05175">
    <property type="entry name" value="MTS"/>
    <property type="match status" value="1"/>
</dbReference>
<dbReference type="SUPFAM" id="SSF53335">
    <property type="entry name" value="S-adenosyl-L-methionine-dependent methyltransferases"/>
    <property type="match status" value="1"/>
</dbReference>
<dbReference type="PROSITE" id="PS00092">
    <property type="entry name" value="N6_MTASE"/>
    <property type="match status" value="1"/>
</dbReference>
<keyword id="KW-0963">Cytoplasm</keyword>
<keyword id="KW-0489">Methyltransferase</keyword>
<keyword id="KW-1185">Reference proteome</keyword>
<keyword id="KW-0949">S-adenosyl-L-methionine</keyword>
<keyword id="KW-0808">Transferase</keyword>
<keyword id="KW-0819">tRNA processing</keyword>